<reference key="1">
    <citation type="journal article" date="2005" name="Nature">
        <title>Genome sequencing and analysis of Aspergillus oryzae.</title>
        <authorList>
            <person name="Machida M."/>
            <person name="Asai K."/>
            <person name="Sano M."/>
            <person name="Tanaka T."/>
            <person name="Kumagai T."/>
            <person name="Terai G."/>
            <person name="Kusumoto K."/>
            <person name="Arima T."/>
            <person name="Akita O."/>
            <person name="Kashiwagi Y."/>
            <person name="Abe K."/>
            <person name="Gomi K."/>
            <person name="Horiuchi H."/>
            <person name="Kitamoto K."/>
            <person name="Kobayashi T."/>
            <person name="Takeuchi M."/>
            <person name="Denning D.W."/>
            <person name="Galagan J.E."/>
            <person name="Nierman W.C."/>
            <person name="Yu J."/>
            <person name="Archer D.B."/>
            <person name="Bennett J.W."/>
            <person name="Bhatnagar D."/>
            <person name="Cleveland T.E."/>
            <person name="Fedorova N.D."/>
            <person name="Gotoh O."/>
            <person name="Horikawa H."/>
            <person name="Hosoyama A."/>
            <person name="Ichinomiya M."/>
            <person name="Igarashi R."/>
            <person name="Iwashita K."/>
            <person name="Juvvadi P.R."/>
            <person name="Kato M."/>
            <person name="Kato Y."/>
            <person name="Kin T."/>
            <person name="Kokubun A."/>
            <person name="Maeda H."/>
            <person name="Maeyama N."/>
            <person name="Maruyama J."/>
            <person name="Nagasaki H."/>
            <person name="Nakajima T."/>
            <person name="Oda K."/>
            <person name="Okada K."/>
            <person name="Paulsen I."/>
            <person name="Sakamoto K."/>
            <person name="Sawano T."/>
            <person name="Takahashi M."/>
            <person name="Takase K."/>
            <person name="Terabayashi Y."/>
            <person name="Wortman J.R."/>
            <person name="Yamada O."/>
            <person name="Yamagata Y."/>
            <person name="Anazawa H."/>
            <person name="Hata Y."/>
            <person name="Koide Y."/>
            <person name="Komori T."/>
            <person name="Koyama Y."/>
            <person name="Minetoki T."/>
            <person name="Suharnan S."/>
            <person name="Tanaka A."/>
            <person name="Isono K."/>
            <person name="Kuhara S."/>
            <person name="Ogasawara N."/>
            <person name="Kikuchi H."/>
        </authorList>
    </citation>
    <scope>NUCLEOTIDE SEQUENCE [LARGE SCALE GENOMIC DNA]</scope>
    <source>
        <strain>ATCC 42149 / RIB 40</strain>
    </source>
</reference>
<keyword id="KW-0004">4Fe-4S</keyword>
<keyword id="KW-0408">Iron</keyword>
<keyword id="KW-0411">Iron-sulfur</keyword>
<keyword id="KW-0479">Metal-binding</keyword>
<keyword id="KW-0496">Mitochondrion</keyword>
<keyword id="KW-1185">Reference proteome</keyword>
<keyword id="KW-0949">S-adenosyl-L-methionine</keyword>
<keyword id="KW-0808">Transferase</keyword>
<keyword id="KW-0809">Transit peptide</keyword>
<name>LIPA_ASPOR</name>
<sequence length="415" mass="45818">MAASTNRLRFLYSSARTVPQTGSITPISRRTYATTEPSPSATGAPATARKRTNFTDKLNAGPSFADFVSGGEDNAPLEPSEAYALKTAMVGPAGRKKEMTRLPSWLKTPIPDSKNYQRLKKDLRGLNLHTVCEEARCPNISDCWGGSDKSAATATIMLMGDTCTRGCRFCSVKTNRRPPPLDPHEPENTAEAISRWSLGYVVLTSVDRDDLADGGARHFAETVIKIKQKKPSMLVECLTGDYLGDLEMVKLVARSGLDVYAHNVETVEALTPFVRDRRATFQQSLRVLEAAKQARPDLITKTSLMLGFGETEEQLWDALRQLRSVGVDVVTFGQYMRPTKRHMPVHEYVTPDQFELWRQRALDMGFLYCASGPLVRSSYKAGEAFIENVLKKRRAAGTAGESVTDSKAAVDEATR</sequence>
<dbReference type="EC" id="2.8.1.8" evidence="1"/>
<dbReference type="EMBL" id="BA000054">
    <property type="protein sequence ID" value="BAE63543.1"/>
    <property type="molecule type" value="Genomic_DNA"/>
</dbReference>
<dbReference type="RefSeq" id="XP_001824676.1">
    <property type="nucleotide sequence ID" value="XM_001824624.3"/>
</dbReference>
<dbReference type="SMR" id="Q2U4H2"/>
<dbReference type="STRING" id="510516.Q2U4H2"/>
<dbReference type="EnsemblFungi" id="BAE63543">
    <property type="protein sequence ID" value="BAE63543"/>
    <property type="gene ID" value="AO090020000344"/>
</dbReference>
<dbReference type="GeneID" id="5996762"/>
<dbReference type="KEGG" id="aor:AO090020000344"/>
<dbReference type="VEuPathDB" id="FungiDB:AO090020000344"/>
<dbReference type="HOGENOM" id="CLU_033144_2_0_1"/>
<dbReference type="OMA" id="PYCDIDF"/>
<dbReference type="OrthoDB" id="57037at5052"/>
<dbReference type="UniPathway" id="UPA00538">
    <property type="reaction ID" value="UER00593"/>
</dbReference>
<dbReference type="Proteomes" id="UP000006564">
    <property type="component" value="Chromosome 6"/>
</dbReference>
<dbReference type="GO" id="GO:0005739">
    <property type="term" value="C:mitochondrion"/>
    <property type="evidence" value="ECO:0007669"/>
    <property type="project" value="UniProtKB-SubCell"/>
</dbReference>
<dbReference type="GO" id="GO:0051539">
    <property type="term" value="F:4 iron, 4 sulfur cluster binding"/>
    <property type="evidence" value="ECO:0007669"/>
    <property type="project" value="UniProtKB-UniRule"/>
</dbReference>
<dbReference type="GO" id="GO:0016992">
    <property type="term" value="F:lipoate synthase activity"/>
    <property type="evidence" value="ECO:0007669"/>
    <property type="project" value="UniProtKB-UniRule"/>
</dbReference>
<dbReference type="GO" id="GO:0046872">
    <property type="term" value="F:metal ion binding"/>
    <property type="evidence" value="ECO:0007669"/>
    <property type="project" value="UniProtKB-KW"/>
</dbReference>
<dbReference type="CDD" id="cd01335">
    <property type="entry name" value="Radical_SAM"/>
    <property type="match status" value="1"/>
</dbReference>
<dbReference type="FunFam" id="3.20.20.70:FF:000036">
    <property type="entry name" value="Lipoyl synthase, mitochondrial"/>
    <property type="match status" value="1"/>
</dbReference>
<dbReference type="Gene3D" id="3.20.20.70">
    <property type="entry name" value="Aldolase class I"/>
    <property type="match status" value="1"/>
</dbReference>
<dbReference type="HAMAP" id="MF_00206">
    <property type="entry name" value="Lipoyl_synth"/>
    <property type="match status" value="1"/>
</dbReference>
<dbReference type="InterPro" id="IPR013785">
    <property type="entry name" value="Aldolase_TIM"/>
</dbReference>
<dbReference type="InterPro" id="IPR006638">
    <property type="entry name" value="Elp3/MiaA/NifB-like_rSAM"/>
</dbReference>
<dbReference type="InterPro" id="IPR031691">
    <property type="entry name" value="LIAS_N"/>
</dbReference>
<dbReference type="InterPro" id="IPR003698">
    <property type="entry name" value="Lipoyl_synth"/>
</dbReference>
<dbReference type="InterPro" id="IPR007197">
    <property type="entry name" value="rSAM"/>
</dbReference>
<dbReference type="NCBIfam" id="TIGR00510">
    <property type="entry name" value="lipA"/>
    <property type="match status" value="1"/>
</dbReference>
<dbReference type="NCBIfam" id="NF004019">
    <property type="entry name" value="PRK05481.1"/>
    <property type="match status" value="1"/>
</dbReference>
<dbReference type="NCBIfam" id="NF009544">
    <property type="entry name" value="PRK12928.1"/>
    <property type="match status" value="1"/>
</dbReference>
<dbReference type="PANTHER" id="PTHR10949">
    <property type="entry name" value="LIPOYL SYNTHASE"/>
    <property type="match status" value="1"/>
</dbReference>
<dbReference type="PANTHER" id="PTHR10949:SF0">
    <property type="entry name" value="LIPOYL SYNTHASE, MITOCHONDRIAL"/>
    <property type="match status" value="1"/>
</dbReference>
<dbReference type="Pfam" id="PF16881">
    <property type="entry name" value="LIAS_N"/>
    <property type="match status" value="1"/>
</dbReference>
<dbReference type="Pfam" id="PF04055">
    <property type="entry name" value="Radical_SAM"/>
    <property type="match status" value="1"/>
</dbReference>
<dbReference type="SFLD" id="SFLDF00271">
    <property type="entry name" value="lipoyl_synthase"/>
    <property type="match status" value="1"/>
</dbReference>
<dbReference type="SFLD" id="SFLDG01058">
    <property type="entry name" value="lipoyl_synthase_like"/>
    <property type="match status" value="1"/>
</dbReference>
<dbReference type="SMART" id="SM00729">
    <property type="entry name" value="Elp3"/>
    <property type="match status" value="1"/>
</dbReference>
<dbReference type="SUPFAM" id="SSF102114">
    <property type="entry name" value="Radical SAM enzymes"/>
    <property type="match status" value="1"/>
</dbReference>
<dbReference type="PROSITE" id="PS51918">
    <property type="entry name" value="RADICAL_SAM"/>
    <property type="match status" value="1"/>
</dbReference>
<evidence type="ECO:0000255" key="1">
    <source>
        <dbReference type="HAMAP-Rule" id="MF_03123"/>
    </source>
</evidence>
<evidence type="ECO:0000255" key="2">
    <source>
        <dbReference type="PROSITE-ProRule" id="PRU01266"/>
    </source>
</evidence>
<evidence type="ECO:0000256" key="3">
    <source>
        <dbReference type="SAM" id="MobiDB-lite"/>
    </source>
</evidence>
<feature type="transit peptide" description="Mitochondrion" evidence="1">
    <location>
        <begin position="1"/>
        <end position="32"/>
    </location>
</feature>
<feature type="chain" id="PRO_0000398256" description="Lipoyl synthase, mitochondrial">
    <location>
        <begin position="33"/>
        <end position="415"/>
    </location>
</feature>
<feature type="domain" description="Radical SAM core" evidence="2">
    <location>
        <begin position="146"/>
        <end position="367"/>
    </location>
</feature>
<feature type="region of interest" description="Disordered" evidence="3">
    <location>
        <begin position="22"/>
        <end position="53"/>
    </location>
</feature>
<feature type="region of interest" description="Disordered" evidence="3">
    <location>
        <begin position="395"/>
        <end position="415"/>
    </location>
</feature>
<feature type="compositionally biased region" description="Polar residues" evidence="3">
    <location>
        <begin position="22"/>
        <end position="32"/>
    </location>
</feature>
<feature type="compositionally biased region" description="Low complexity" evidence="3">
    <location>
        <begin position="33"/>
        <end position="47"/>
    </location>
</feature>
<feature type="binding site" evidence="1">
    <location>
        <position position="132"/>
    </location>
    <ligand>
        <name>[4Fe-4S] cluster</name>
        <dbReference type="ChEBI" id="CHEBI:49883"/>
        <label>1</label>
    </ligand>
</feature>
<feature type="binding site" evidence="1">
    <location>
        <position position="137"/>
    </location>
    <ligand>
        <name>[4Fe-4S] cluster</name>
        <dbReference type="ChEBI" id="CHEBI:49883"/>
        <label>1</label>
    </ligand>
</feature>
<feature type="binding site" evidence="1">
    <location>
        <position position="143"/>
    </location>
    <ligand>
        <name>[4Fe-4S] cluster</name>
        <dbReference type="ChEBI" id="CHEBI:49883"/>
        <label>1</label>
    </ligand>
</feature>
<feature type="binding site" evidence="1">
    <location>
        <position position="163"/>
    </location>
    <ligand>
        <name>[4Fe-4S] cluster</name>
        <dbReference type="ChEBI" id="CHEBI:49883"/>
        <label>2</label>
        <note>4Fe-4S-S-AdoMet</note>
    </ligand>
</feature>
<feature type="binding site" evidence="1">
    <location>
        <position position="167"/>
    </location>
    <ligand>
        <name>[4Fe-4S] cluster</name>
        <dbReference type="ChEBI" id="CHEBI:49883"/>
        <label>2</label>
        <note>4Fe-4S-S-AdoMet</note>
    </ligand>
</feature>
<feature type="binding site" evidence="1">
    <location>
        <position position="170"/>
    </location>
    <ligand>
        <name>[4Fe-4S] cluster</name>
        <dbReference type="ChEBI" id="CHEBI:49883"/>
        <label>2</label>
        <note>4Fe-4S-S-AdoMet</note>
    </ligand>
</feature>
<feature type="binding site" evidence="1">
    <location>
        <position position="378"/>
    </location>
    <ligand>
        <name>[4Fe-4S] cluster</name>
        <dbReference type="ChEBI" id="CHEBI:49883"/>
        <label>1</label>
    </ligand>
</feature>
<proteinExistence type="inferred from homology"/>
<accession>Q2U4H2</accession>
<gene>
    <name type="ORF">AO090020000344</name>
</gene>
<organism>
    <name type="scientific">Aspergillus oryzae (strain ATCC 42149 / RIB 40)</name>
    <name type="common">Yellow koji mold</name>
    <dbReference type="NCBI Taxonomy" id="510516"/>
    <lineage>
        <taxon>Eukaryota</taxon>
        <taxon>Fungi</taxon>
        <taxon>Dikarya</taxon>
        <taxon>Ascomycota</taxon>
        <taxon>Pezizomycotina</taxon>
        <taxon>Eurotiomycetes</taxon>
        <taxon>Eurotiomycetidae</taxon>
        <taxon>Eurotiales</taxon>
        <taxon>Aspergillaceae</taxon>
        <taxon>Aspergillus</taxon>
        <taxon>Aspergillus subgen. Circumdati</taxon>
    </lineage>
</organism>
<comment type="function">
    <text evidence="1">Catalyzes the radical-mediated insertion of two sulfur atoms into the C-6 and C-8 positions of the octanoyl moiety bound to the lipoyl domains of lipoate-dependent enzymes, thereby converting the octanoylated domains into lipoylated derivatives.</text>
</comment>
<comment type="catalytic activity">
    <reaction evidence="1">
        <text>[[Fe-S] cluster scaffold protein carrying a second [4Fe-4S](2+) cluster] + N(6)-octanoyl-L-lysyl-[protein] + 2 oxidized [2Fe-2S]-[ferredoxin] + 2 S-adenosyl-L-methionine + 4 H(+) = [[Fe-S] cluster scaffold protein] + N(6)-[(R)-dihydrolipoyl]-L-lysyl-[protein] + 4 Fe(3+) + 2 hydrogen sulfide + 2 5'-deoxyadenosine + 2 L-methionine + 2 reduced [2Fe-2S]-[ferredoxin]</text>
        <dbReference type="Rhea" id="RHEA:16585"/>
        <dbReference type="Rhea" id="RHEA-COMP:9928"/>
        <dbReference type="Rhea" id="RHEA-COMP:10000"/>
        <dbReference type="Rhea" id="RHEA-COMP:10001"/>
        <dbReference type="Rhea" id="RHEA-COMP:10475"/>
        <dbReference type="Rhea" id="RHEA-COMP:14568"/>
        <dbReference type="Rhea" id="RHEA-COMP:14569"/>
        <dbReference type="ChEBI" id="CHEBI:15378"/>
        <dbReference type="ChEBI" id="CHEBI:17319"/>
        <dbReference type="ChEBI" id="CHEBI:29034"/>
        <dbReference type="ChEBI" id="CHEBI:29919"/>
        <dbReference type="ChEBI" id="CHEBI:33722"/>
        <dbReference type="ChEBI" id="CHEBI:33737"/>
        <dbReference type="ChEBI" id="CHEBI:33738"/>
        <dbReference type="ChEBI" id="CHEBI:57844"/>
        <dbReference type="ChEBI" id="CHEBI:59789"/>
        <dbReference type="ChEBI" id="CHEBI:78809"/>
        <dbReference type="ChEBI" id="CHEBI:83100"/>
        <dbReference type="EC" id="2.8.1.8"/>
    </reaction>
</comment>
<comment type="cofactor">
    <cofactor evidence="1">
        <name>[4Fe-4S] cluster</name>
        <dbReference type="ChEBI" id="CHEBI:49883"/>
    </cofactor>
    <text evidence="1">Binds 2 [4Fe-4S] clusters per subunit. One cluster is coordinated with 3 cysteines and an exchangeable S-adenosyl-L-methionine.</text>
</comment>
<comment type="pathway">
    <text evidence="1">Protein modification; protein lipoylation via endogenous pathway; protein N(6)-(lipoyl)lysine from octanoyl-[acyl-carrier-protein]: step 2/2.</text>
</comment>
<comment type="subcellular location">
    <subcellularLocation>
        <location evidence="1">Mitochondrion</location>
    </subcellularLocation>
</comment>
<comment type="similarity">
    <text evidence="1">Belongs to the radical SAM superfamily. Lipoyl synthase family.</text>
</comment>
<protein>
    <recommendedName>
        <fullName evidence="1">Lipoyl synthase, mitochondrial</fullName>
        <ecNumber evidence="1">2.8.1.8</ecNumber>
    </recommendedName>
    <alternativeName>
        <fullName evidence="1">Lipoate synthase</fullName>
        <shortName evidence="1">LS</shortName>
        <shortName evidence="1">Lip-syn</shortName>
    </alternativeName>
    <alternativeName>
        <fullName evidence="1">Lipoic acid synthase</fullName>
    </alternativeName>
</protein>